<comment type="function">
    <text evidence="1">This protein is one of the two subunits of integration host factor, a specific DNA-binding protein that functions in genetic recombination as well as in transcriptional and translational control.</text>
</comment>
<comment type="subunit">
    <text evidence="1">Heterodimer of an alpha and a beta chain.</text>
</comment>
<comment type="similarity">
    <text evidence="1">Belongs to the bacterial histone-like protein family.</text>
</comment>
<keyword id="KW-0233">DNA recombination</keyword>
<keyword id="KW-0238">DNA-binding</keyword>
<keyword id="KW-1185">Reference proteome</keyword>
<keyword id="KW-0804">Transcription</keyword>
<keyword id="KW-0805">Transcription regulation</keyword>
<keyword id="KW-0810">Translation regulation</keyword>
<name>IHFB_ALKEH</name>
<evidence type="ECO:0000255" key="1">
    <source>
        <dbReference type="HAMAP-Rule" id="MF_00381"/>
    </source>
</evidence>
<evidence type="ECO:0000256" key="2">
    <source>
        <dbReference type="SAM" id="MobiDB-lite"/>
    </source>
</evidence>
<protein>
    <recommendedName>
        <fullName evidence="1">Integration host factor subunit beta</fullName>
        <shortName evidence="1">IHF-beta</shortName>
    </recommendedName>
</protein>
<organism>
    <name type="scientific">Alkalilimnicola ehrlichii (strain ATCC BAA-1101 / DSM 17681 / MLHE-1)</name>
    <dbReference type="NCBI Taxonomy" id="187272"/>
    <lineage>
        <taxon>Bacteria</taxon>
        <taxon>Pseudomonadati</taxon>
        <taxon>Pseudomonadota</taxon>
        <taxon>Gammaproteobacteria</taxon>
        <taxon>Chromatiales</taxon>
        <taxon>Ectothiorhodospiraceae</taxon>
        <taxon>Alkalilimnicola</taxon>
    </lineage>
</organism>
<dbReference type="EMBL" id="CP000453">
    <property type="protein sequence ID" value="ABI56286.1"/>
    <property type="molecule type" value="Genomic_DNA"/>
</dbReference>
<dbReference type="RefSeq" id="WP_011628681.1">
    <property type="nucleotide sequence ID" value="NC_008340.1"/>
</dbReference>
<dbReference type="SMR" id="Q0AA51"/>
<dbReference type="KEGG" id="aeh:Mlg_0932"/>
<dbReference type="eggNOG" id="COG0776">
    <property type="taxonomic scope" value="Bacteria"/>
</dbReference>
<dbReference type="HOGENOM" id="CLU_105066_2_0_6"/>
<dbReference type="OrthoDB" id="9804203at2"/>
<dbReference type="Proteomes" id="UP000001962">
    <property type="component" value="Chromosome"/>
</dbReference>
<dbReference type="GO" id="GO:0005694">
    <property type="term" value="C:chromosome"/>
    <property type="evidence" value="ECO:0007669"/>
    <property type="project" value="InterPro"/>
</dbReference>
<dbReference type="GO" id="GO:0005829">
    <property type="term" value="C:cytosol"/>
    <property type="evidence" value="ECO:0007669"/>
    <property type="project" value="TreeGrafter"/>
</dbReference>
<dbReference type="GO" id="GO:0003677">
    <property type="term" value="F:DNA binding"/>
    <property type="evidence" value="ECO:0007669"/>
    <property type="project" value="UniProtKB-UniRule"/>
</dbReference>
<dbReference type="GO" id="GO:0030527">
    <property type="term" value="F:structural constituent of chromatin"/>
    <property type="evidence" value="ECO:0007669"/>
    <property type="project" value="InterPro"/>
</dbReference>
<dbReference type="GO" id="GO:0006310">
    <property type="term" value="P:DNA recombination"/>
    <property type="evidence" value="ECO:0007669"/>
    <property type="project" value="UniProtKB-UniRule"/>
</dbReference>
<dbReference type="GO" id="GO:0006355">
    <property type="term" value="P:regulation of DNA-templated transcription"/>
    <property type="evidence" value="ECO:0007669"/>
    <property type="project" value="UniProtKB-UniRule"/>
</dbReference>
<dbReference type="GO" id="GO:0006417">
    <property type="term" value="P:regulation of translation"/>
    <property type="evidence" value="ECO:0007669"/>
    <property type="project" value="UniProtKB-UniRule"/>
</dbReference>
<dbReference type="CDD" id="cd13836">
    <property type="entry name" value="IHF_B"/>
    <property type="match status" value="1"/>
</dbReference>
<dbReference type="FunFam" id="4.10.520.10:FF:000003">
    <property type="entry name" value="Integration host factor subunit beta"/>
    <property type="match status" value="1"/>
</dbReference>
<dbReference type="Gene3D" id="4.10.520.10">
    <property type="entry name" value="IHF-like DNA-binding proteins"/>
    <property type="match status" value="1"/>
</dbReference>
<dbReference type="HAMAP" id="MF_00381">
    <property type="entry name" value="IHF_beta"/>
    <property type="match status" value="1"/>
</dbReference>
<dbReference type="InterPro" id="IPR000119">
    <property type="entry name" value="Hist_DNA-bd"/>
</dbReference>
<dbReference type="InterPro" id="IPR020816">
    <property type="entry name" value="Histone-like_DNA-bd_CS"/>
</dbReference>
<dbReference type="InterPro" id="IPR010992">
    <property type="entry name" value="IHF-like_DNA-bd_dom_sf"/>
</dbReference>
<dbReference type="InterPro" id="IPR005685">
    <property type="entry name" value="IHF_beta"/>
</dbReference>
<dbReference type="NCBIfam" id="TIGR00988">
    <property type="entry name" value="hip"/>
    <property type="match status" value="1"/>
</dbReference>
<dbReference type="NCBIfam" id="NF001222">
    <property type="entry name" value="PRK00199.1"/>
    <property type="match status" value="1"/>
</dbReference>
<dbReference type="PANTHER" id="PTHR33175">
    <property type="entry name" value="DNA-BINDING PROTEIN HU"/>
    <property type="match status" value="1"/>
</dbReference>
<dbReference type="PANTHER" id="PTHR33175:SF5">
    <property type="entry name" value="INTEGRATION HOST FACTOR SUBUNIT BETA"/>
    <property type="match status" value="1"/>
</dbReference>
<dbReference type="Pfam" id="PF00216">
    <property type="entry name" value="Bac_DNA_binding"/>
    <property type="match status" value="1"/>
</dbReference>
<dbReference type="PRINTS" id="PR01727">
    <property type="entry name" value="DNABINDINGHU"/>
</dbReference>
<dbReference type="SMART" id="SM00411">
    <property type="entry name" value="BHL"/>
    <property type="match status" value="1"/>
</dbReference>
<dbReference type="SUPFAM" id="SSF47729">
    <property type="entry name" value="IHF-like DNA-binding proteins"/>
    <property type="match status" value="1"/>
</dbReference>
<dbReference type="PROSITE" id="PS00045">
    <property type="entry name" value="HISTONE_LIKE"/>
    <property type="match status" value="1"/>
</dbReference>
<reference key="1">
    <citation type="submission" date="2006-08" db="EMBL/GenBank/DDBJ databases">
        <title>Complete sequence of Alkalilimnicola ehrilichei MLHE-1.</title>
        <authorList>
            <person name="Copeland A."/>
            <person name="Lucas S."/>
            <person name="Lapidus A."/>
            <person name="Barry K."/>
            <person name="Detter J.C."/>
            <person name="Glavina del Rio T."/>
            <person name="Hammon N."/>
            <person name="Israni S."/>
            <person name="Dalin E."/>
            <person name="Tice H."/>
            <person name="Pitluck S."/>
            <person name="Sims D."/>
            <person name="Brettin T."/>
            <person name="Bruce D."/>
            <person name="Han C."/>
            <person name="Tapia R."/>
            <person name="Gilna P."/>
            <person name="Schmutz J."/>
            <person name="Larimer F."/>
            <person name="Land M."/>
            <person name="Hauser L."/>
            <person name="Kyrpides N."/>
            <person name="Mikhailova N."/>
            <person name="Oremland R.S."/>
            <person name="Hoeft S.E."/>
            <person name="Switzer-Blum J."/>
            <person name="Kulp T."/>
            <person name="King G."/>
            <person name="Tabita R."/>
            <person name="Witte B."/>
            <person name="Santini J.M."/>
            <person name="Basu P."/>
            <person name="Hollibaugh J.T."/>
            <person name="Xie G."/>
            <person name="Stolz J.F."/>
            <person name="Richardson P."/>
        </authorList>
    </citation>
    <scope>NUCLEOTIDE SEQUENCE [LARGE SCALE GENOMIC DNA]</scope>
    <source>
        <strain>ATCC BAA-1101 / DSM 17681 / MLHE-1</strain>
    </source>
</reference>
<accession>Q0AA51</accession>
<feature type="chain" id="PRO_1000060584" description="Integration host factor subunit beta">
    <location>
        <begin position="1"/>
        <end position="100"/>
    </location>
</feature>
<feature type="region of interest" description="Disordered" evidence="2">
    <location>
        <begin position="53"/>
        <end position="100"/>
    </location>
</feature>
<feature type="compositionally biased region" description="Basic and acidic residues" evidence="2">
    <location>
        <begin position="82"/>
        <end position="91"/>
    </location>
</feature>
<proteinExistence type="inferred from homology"/>
<gene>
    <name evidence="1" type="primary">ihfB</name>
    <name evidence="1" type="synonym">himD</name>
    <name type="ordered locus">Mlg_0932</name>
</gene>
<sequence length="100" mass="11166">MTKSELIEVIAGKQQHLAHKDVELAVKTLLEQMSETLASGERIEIRGFGSFSLHHRPPRIGRNPKTGEPVALPGKYVPHFKPGKELRDRVNAGRHNPIQS</sequence>